<reference key="1">
    <citation type="journal article" date="2006" name="Proc. Natl. Acad. Sci. U.S.A.">
        <title>Comparative genomics of the lactic acid bacteria.</title>
        <authorList>
            <person name="Makarova K.S."/>
            <person name="Slesarev A."/>
            <person name="Wolf Y.I."/>
            <person name="Sorokin A."/>
            <person name="Mirkin B."/>
            <person name="Koonin E.V."/>
            <person name="Pavlov A."/>
            <person name="Pavlova N."/>
            <person name="Karamychev V."/>
            <person name="Polouchine N."/>
            <person name="Shakhova V."/>
            <person name="Grigoriev I."/>
            <person name="Lou Y."/>
            <person name="Rohksar D."/>
            <person name="Lucas S."/>
            <person name="Huang K."/>
            <person name="Goodstein D.M."/>
            <person name="Hawkins T."/>
            <person name="Plengvidhya V."/>
            <person name="Welker D."/>
            <person name="Hughes J."/>
            <person name="Goh Y."/>
            <person name="Benson A."/>
            <person name="Baldwin K."/>
            <person name="Lee J.-H."/>
            <person name="Diaz-Muniz I."/>
            <person name="Dosti B."/>
            <person name="Smeianov V."/>
            <person name="Wechter W."/>
            <person name="Barabote R."/>
            <person name="Lorca G."/>
            <person name="Altermann E."/>
            <person name="Barrangou R."/>
            <person name="Ganesan B."/>
            <person name="Xie Y."/>
            <person name="Rawsthorne H."/>
            <person name="Tamir D."/>
            <person name="Parker C."/>
            <person name="Breidt F."/>
            <person name="Broadbent J.R."/>
            <person name="Hutkins R."/>
            <person name="O'Sullivan D."/>
            <person name="Steele J."/>
            <person name="Unlu G."/>
            <person name="Saier M.H. Jr."/>
            <person name="Klaenhammer T."/>
            <person name="Richardson P."/>
            <person name="Kozyavkin S."/>
            <person name="Weimer B.C."/>
            <person name="Mills D.A."/>
        </authorList>
    </citation>
    <scope>NUCLEOTIDE SEQUENCE [LARGE SCALE GENOMIC DNA]</scope>
    <source>
        <strain>ATCC BAA-491 / LMD-9</strain>
    </source>
</reference>
<evidence type="ECO:0000255" key="1">
    <source>
        <dbReference type="HAMAP-Rule" id="MF_00109"/>
    </source>
</evidence>
<name>AROK_STRTD</name>
<accession>Q03LG8</accession>
<sequence length="163" mass="18521">MAKVLLGFMGVGKSSVAPYLNGRFVDMDQVIEDKIGMSITDFFAKEGEASFRQIESETLEELLQEGDDVIISTGGGVVVTECNRKLLKKNRKHNVWLHSSFDVVYNRIKKDIKNQRPLFLNHSKEEFKAIYDGRMALYKGLADLVVTVDNRTPEEVARFIKCM</sequence>
<organism>
    <name type="scientific">Streptococcus thermophilus (strain ATCC BAA-491 / LMD-9)</name>
    <dbReference type="NCBI Taxonomy" id="322159"/>
    <lineage>
        <taxon>Bacteria</taxon>
        <taxon>Bacillati</taxon>
        <taxon>Bacillota</taxon>
        <taxon>Bacilli</taxon>
        <taxon>Lactobacillales</taxon>
        <taxon>Streptococcaceae</taxon>
        <taxon>Streptococcus</taxon>
    </lineage>
</organism>
<proteinExistence type="inferred from homology"/>
<dbReference type="EC" id="2.7.1.71" evidence="1"/>
<dbReference type="EMBL" id="CP000419">
    <property type="protein sequence ID" value="ABJ65954.1"/>
    <property type="molecule type" value="Genomic_DNA"/>
</dbReference>
<dbReference type="RefSeq" id="WP_002950265.1">
    <property type="nucleotide sequence ID" value="NC_008532.1"/>
</dbReference>
<dbReference type="SMR" id="Q03LG8"/>
<dbReference type="KEGG" id="ste:STER_0696"/>
<dbReference type="HOGENOM" id="CLU_057607_4_3_9"/>
<dbReference type="UniPathway" id="UPA00053">
    <property type="reaction ID" value="UER00088"/>
</dbReference>
<dbReference type="GO" id="GO:0005829">
    <property type="term" value="C:cytosol"/>
    <property type="evidence" value="ECO:0007669"/>
    <property type="project" value="TreeGrafter"/>
</dbReference>
<dbReference type="GO" id="GO:0005524">
    <property type="term" value="F:ATP binding"/>
    <property type="evidence" value="ECO:0007669"/>
    <property type="project" value="UniProtKB-UniRule"/>
</dbReference>
<dbReference type="GO" id="GO:0000287">
    <property type="term" value="F:magnesium ion binding"/>
    <property type="evidence" value="ECO:0007669"/>
    <property type="project" value="UniProtKB-UniRule"/>
</dbReference>
<dbReference type="GO" id="GO:0004765">
    <property type="term" value="F:shikimate kinase activity"/>
    <property type="evidence" value="ECO:0007669"/>
    <property type="project" value="UniProtKB-UniRule"/>
</dbReference>
<dbReference type="GO" id="GO:0008652">
    <property type="term" value="P:amino acid biosynthetic process"/>
    <property type="evidence" value="ECO:0007669"/>
    <property type="project" value="UniProtKB-KW"/>
</dbReference>
<dbReference type="GO" id="GO:0009073">
    <property type="term" value="P:aromatic amino acid family biosynthetic process"/>
    <property type="evidence" value="ECO:0007669"/>
    <property type="project" value="UniProtKB-KW"/>
</dbReference>
<dbReference type="GO" id="GO:0009423">
    <property type="term" value="P:chorismate biosynthetic process"/>
    <property type="evidence" value="ECO:0007669"/>
    <property type="project" value="UniProtKB-UniRule"/>
</dbReference>
<dbReference type="CDD" id="cd00464">
    <property type="entry name" value="SK"/>
    <property type="match status" value="1"/>
</dbReference>
<dbReference type="Gene3D" id="3.40.50.300">
    <property type="entry name" value="P-loop containing nucleotide triphosphate hydrolases"/>
    <property type="match status" value="1"/>
</dbReference>
<dbReference type="HAMAP" id="MF_00109">
    <property type="entry name" value="Shikimate_kinase"/>
    <property type="match status" value="1"/>
</dbReference>
<dbReference type="InterPro" id="IPR027417">
    <property type="entry name" value="P-loop_NTPase"/>
</dbReference>
<dbReference type="InterPro" id="IPR031322">
    <property type="entry name" value="Shikimate/glucono_kinase"/>
</dbReference>
<dbReference type="InterPro" id="IPR000623">
    <property type="entry name" value="Shikimate_kinase/TSH1"/>
</dbReference>
<dbReference type="InterPro" id="IPR023000">
    <property type="entry name" value="Shikimate_kinase_CS"/>
</dbReference>
<dbReference type="PANTHER" id="PTHR21087">
    <property type="entry name" value="SHIKIMATE KINASE"/>
    <property type="match status" value="1"/>
</dbReference>
<dbReference type="PANTHER" id="PTHR21087:SF16">
    <property type="entry name" value="SHIKIMATE KINASE 1, CHLOROPLASTIC"/>
    <property type="match status" value="1"/>
</dbReference>
<dbReference type="Pfam" id="PF01202">
    <property type="entry name" value="SKI"/>
    <property type="match status" value="1"/>
</dbReference>
<dbReference type="PRINTS" id="PR01100">
    <property type="entry name" value="SHIKIMTKNASE"/>
</dbReference>
<dbReference type="SUPFAM" id="SSF52540">
    <property type="entry name" value="P-loop containing nucleoside triphosphate hydrolases"/>
    <property type="match status" value="1"/>
</dbReference>
<dbReference type="PROSITE" id="PS01128">
    <property type="entry name" value="SHIKIMATE_KINASE"/>
    <property type="match status" value="1"/>
</dbReference>
<protein>
    <recommendedName>
        <fullName evidence="1">Shikimate kinase</fullName>
        <shortName evidence="1">SK</shortName>
        <ecNumber evidence="1">2.7.1.71</ecNumber>
    </recommendedName>
</protein>
<keyword id="KW-0028">Amino-acid biosynthesis</keyword>
<keyword id="KW-0057">Aromatic amino acid biosynthesis</keyword>
<keyword id="KW-0067">ATP-binding</keyword>
<keyword id="KW-0963">Cytoplasm</keyword>
<keyword id="KW-0418">Kinase</keyword>
<keyword id="KW-0460">Magnesium</keyword>
<keyword id="KW-0479">Metal-binding</keyword>
<keyword id="KW-0547">Nucleotide-binding</keyword>
<keyword id="KW-0808">Transferase</keyword>
<gene>
    <name evidence="1" type="primary">aroK</name>
    <name type="ordered locus">STER_0696</name>
</gene>
<comment type="function">
    <text evidence="1">Catalyzes the specific phosphorylation of the 3-hydroxyl group of shikimic acid using ATP as a cosubstrate.</text>
</comment>
<comment type="catalytic activity">
    <reaction evidence="1">
        <text>shikimate + ATP = 3-phosphoshikimate + ADP + H(+)</text>
        <dbReference type="Rhea" id="RHEA:13121"/>
        <dbReference type="ChEBI" id="CHEBI:15378"/>
        <dbReference type="ChEBI" id="CHEBI:30616"/>
        <dbReference type="ChEBI" id="CHEBI:36208"/>
        <dbReference type="ChEBI" id="CHEBI:145989"/>
        <dbReference type="ChEBI" id="CHEBI:456216"/>
        <dbReference type="EC" id="2.7.1.71"/>
    </reaction>
</comment>
<comment type="cofactor">
    <cofactor evidence="1">
        <name>Mg(2+)</name>
        <dbReference type="ChEBI" id="CHEBI:18420"/>
    </cofactor>
    <text evidence="1">Binds 1 Mg(2+) ion per subunit.</text>
</comment>
<comment type="pathway">
    <text evidence="1">Metabolic intermediate biosynthesis; chorismate biosynthesis; chorismate from D-erythrose 4-phosphate and phosphoenolpyruvate: step 5/7.</text>
</comment>
<comment type="subunit">
    <text evidence="1">Monomer.</text>
</comment>
<comment type="subcellular location">
    <subcellularLocation>
        <location evidence="1">Cytoplasm</location>
    </subcellularLocation>
</comment>
<comment type="similarity">
    <text evidence="1">Belongs to the shikimate kinase family.</text>
</comment>
<feature type="chain" id="PRO_1000094427" description="Shikimate kinase">
    <location>
        <begin position="1"/>
        <end position="163"/>
    </location>
</feature>
<feature type="binding site" evidence="1">
    <location>
        <begin position="10"/>
        <end position="15"/>
    </location>
    <ligand>
        <name>ATP</name>
        <dbReference type="ChEBI" id="CHEBI:30616"/>
    </ligand>
</feature>
<feature type="binding site" evidence="1">
    <location>
        <position position="14"/>
    </location>
    <ligand>
        <name>Mg(2+)</name>
        <dbReference type="ChEBI" id="CHEBI:18420"/>
    </ligand>
</feature>
<feature type="binding site" evidence="1">
    <location>
        <position position="28"/>
    </location>
    <ligand>
        <name>substrate</name>
    </ligand>
</feature>
<feature type="binding site" evidence="1">
    <location>
        <position position="52"/>
    </location>
    <ligand>
        <name>substrate</name>
    </ligand>
</feature>
<feature type="binding site" evidence="1">
    <location>
        <position position="75"/>
    </location>
    <ligand>
        <name>substrate</name>
    </ligand>
</feature>
<feature type="binding site" evidence="1">
    <location>
        <position position="116"/>
    </location>
    <ligand>
        <name>ATP</name>
        <dbReference type="ChEBI" id="CHEBI:30616"/>
    </ligand>
</feature>
<feature type="binding site" evidence="1">
    <location>
        <position position="134"/>
    </location>
    <ligand>
        <name>substrate</name>
    </ligand>
</feature>
<feature type="binding site" evidence="1">
    <location>
        <position position="151"/>
    </location>
    <ligand>
        <name>ATP</name>
        <dbReference type="ChEBI" id="CHEBI:30616"/>
    </ligand>
</feature>